<accession>Q11CQ9</accession>
<dbReference type="EMBL" id="CP000390">
    <property type="protein sequence ID" value="ABG64816.1"/>
    <property type="molecule type" value="Genomic_DNA"/>
</dbReference>
<dbReference type="SMR" id="Q11CQ9"/>
<dbReference type="STRING" id="266779.Meso_3445"/>
<dbReference type="KEGG" id="mes:Meso_3445"/>
<dbReference type="eggNOG" id="COG0335">
    <property type="taxonomic scope" value="Bacteria"/>
</dbReference>
<dbReference type="HOGENOM" id="CLU_103507_0_2_5"/>
<dbReference type="OrthoDB" id="9803541at2"/>
<dbReference type="GO" id="GO:0022625">
    <property type="term" value="C:cytosolic large ribosomal subunit"/>
    <property type="evidence" value="ECO:0007669"/>
    <property type="project" value="TreeGrafter"/>
</dbReference>
<dbReference type="GO" id="GO:0003735">
    <property type="term" value="F:structural constituent of ribosome"/>
    <property type="evidence" value="ECO:0007669"/>
    <property type="project" value="InterPro"/>
</dbReference>
<dbReference type="GO" id="GO:0006412">
    <property type="term" value="P:translation"/>
    <property type="evidence" value="ECO:0007669"/>
    <property type="project" value="UniProtKB-UniRule"/>
</dbReference>
<dbReference type="FunFam" id="2.30.30.790:FF:000001">
    <property type="entry name" value="50S ribosomal protein L19"/>
    <property type="match status" value="1"/>
</dbReference>
<dbReference type="Gene3D" id="2.30.30.790">
    <property type="match status" value="1"/>
</dbReference>
<dbReference type="HAMAP" id="MF_00402">
    <property type="entry name" value="Ribosomal_bL19"/>
    <property type="match status" value="1"/>
</dbReference>
<dbReference type="InterPro" id="IPR001857">
    <property type="entry name" value="Ribosomal_bL19"/>
</dbReference>
<dbReference type="InterPro" id="IPR018257">
    <property type="entry name" value="Ribosomal_bL19_CS"/>
</dbReference>
<dbReference type="InterPro" id="IPR038657">
    <property type="entry name" value="Ribosomal_bL19_sf"/>
</dbReference>
<dbReference type="InterPro" id="IPR008991">
    <property type="entry name" value="Translation_prot_SH3-like_sf"/>
</dbReference>
<dbReference type="NCBIfam" id="TIGR01024">
    <property type="entry name" value="rplS_bact"/>
    <property type="match status" value="1"/>
</dbReference>
<dbReference type="PANTHER" id="PTHR15680:SF9">
    <property type="entry name" value="LARGE RIBOSOMAL SUBUNIT PROTEIN BL19M"/>
    <property type="match status" value="1"/>
</dbReference>
<dbReference type="PANTHER" id="PTHR15680">
    <property type="entry name" value="RIBOSOMAL PROTEIN L19"/>
    <property type="match status" value="1"/>
</dbReference>
<dbReference type="Pfam" id="PF01245">
    <property type="entry name" value="Ribosomal_L19"/>
    <property type="match status" value="1"/>
</dbReference>
<dbReference type="PRINTS" id="PR00061">
    <property type="entry name" value="RIBOSOMALL19"/>
</dbReference>
<dbReference type="SUPFAM" id="SSF50104">
    <property type="entry name" value="Translation proteins SH3-like domain"/>
    <property type="match status" value="1"/>
</dbReference>
<dbReference type="PROSITE" id="PS01015">
    <property type="entry name" value="RIBOSOMAL_L19"/>
    <property type="match status" value="1"/>
</dbReference>
<name>RL19_CHESB</name>
<evidence type="ECO:0000255" key="1">
    <source>
        <dbReference type="HAMAP-Rule" id="MF_00402"/>
    </source>
</evidence>
<evidence type="ECO:0000305" key="2"/>
<feature type="chain" id="PRO_0000252518" description="Large ribosomal subunit protein bL19">
    <location>
        <begin position="1"/>
        <end position="166"/>
    </location>
</feature>
<comment type="function">
    <text evidence="1">This protein is located at the 30S-50S ribosomal subunit interface and may play a role in the structure and function of the aminoacyl-tRNA binding site.</text>
</comment>
<comment type="similarity">
    <text evidence="1">Belongs to the bacterial ribosomal protein bL19 family.</text>
</comment>
<reference key="1">
    <citation type="submission" date="2006-06" db="EMBL/GenBank/DDBJ databases">
        <title>Complete sequence of chromosome of Mesorhizobium sp. BNC1.</title>
        <authorList>
            <consortium name="US DOE Joint Genome Institute"/>
            <person name="Copeland A."/>
            <person name="Lucas S."/>
            <person name="Lapidus A."/>
            <person name="Barry K."/>
            <person name="Detter J.C."/>
            <person name="Glavina del Rio T."/>
            <person name="Hammon N."/>
            <person name="Israni S."/>
            <person name="Dalin E."/>
            <person name="Tice H."/>
            <person name="Pitluck S."/>
            <person name="Chertkov O."/>
            <person name="Brettin T."/>
            <person name="Bruce D."/>
            <person name="Han C."/>
            <person name="Tapia R."/>
            <person name="Gilna P."/>
            <person name="Schmutz J."/>
            <person name="Larimer F."/>
            <person name="Land M."/>
            <person name="Hauser L."/>
            <person name="Kyrpides N."/>
            <person name="Mikhailova N."/>
            <person name="Richardson P."/>
        </authorList>
    </citation>
    <scope>NUCLEOTIDE SEQUENCE [LARGE SCALE GENOMIC DNA]</scope>
    <source>
        <strain>BNC1</strain>
    </source>
</reference>
<sequence>MDLIRQLEAEQAQKIAAKRTLPDFSPGDTLRVQVRVTEGNRTRVQAFEGVCIARSGSGLQENFTVRKISYGEGVERVFPVYSPLVEAVEVVRRGKVRRAKLYYLRDRRGKSARISENTGARARKLNDAEREAAAQERARIEAEKVAAAEALAAEKAAAEAAEAKSE</sequence>
<proteinExistence type="inferred from homology"/>
<protein>
    <recommendedName>
        <fullName evidence="1">Large ribosomal subunit protein bL19</fullName>
    </recommendedName>
    <alternativeName>
        <fullName evidence="2">50S ribosomal protein L19</fullName>
    </alternativeName>
</protein>
<keyword id="KW-0687">Ribonucleoprotein</keyword>
<keyword id="KW-0689">Ribosomal protein</keyword>
<gene>
    <name evidence="1" type="primary">rplS</name>
    <name type="ordered locus">Meso_3445</name>
</gene>
<organism>
    <name type="scientific">Chelativorans sp. (strain BNC1)</name>
    <dbReference type="NCBI Taxonomy" id="266779"/>
    <lineage>
        <taxon>Bacteria</taxon>
        <taxon>Pseudomonadati</taxon>
        <taxon>Pseudomonadota</taxon>
        <taxon>Alphaproteobacteria</taxon>
        <taxon>Hyphomicrobiales</taxon>
        <taxon>Phyllobacteriaceae</taxon>
        <taxon>Chelativorans</taxon>
    </lineage>
</organism>